<comment type="function">
    <text evidence="1">Binds 23S rRNA and is also seen to make contacts with the A and possibly P site tRNAs.</text>
</comment>
<comment type="subunit">
    <text evidence="1">Part of the 50S ribosomal subunit.</text>
</comment>
<comment type="similarity">
    <text evidence="1">Belongs to the universal ribosomal protein uL16 family.</text>
</comment>
<accession>C4ZBS6</accession>
<proteinExistence type="inferred from homology"/>
<reference key="1">
    <citation type="journal article" date="2009" name="Proc. Natl. Acad. Sci. U.S.A.">
        <title>Characterizing a model human gut microbiota composed of members of its two dominant bacterial phyla.</title>
        <authorList>
            <person name="Mahowald M.A."/>
            <person name="Rey F.E."/>
            <person name="Seedorf H."/>
            <person name="Turnbaugh P.J."/>
            <person name="Fulton R.S."/>
            <person name="Wollam A."/>
            <person name="Shah N."/>
            <person name="Wang C."/>
            <person name="Magrini V."/>
            <person name="Wilson R.K."/>
            <person name="Cantarel B.L."/>
            <person name="Coutinho P.M."/>
            <person name="Henrissat B."/>
            <person name="Crock L.W."/>
            <person name="Russell A."/>
            <person name="Verberkmoes N.C."/>
            <person name="Hettich R.L."/>
            <person name="Gordon J.I."/>
        </authorList>
    </citation>
    <scope>NUCLEOTIDE SEQUENCE [LARGE SCALE GENOMIC DNA]</scope>
    <source>
        <strain>ATCC 33656 / DSM 3377 / JCM 17463 / KCTC 5835 / LMG 30912 / VPI 0990</strain>
    </source>
</reference>
<feature type="chain" id="PRO_1000214731" description="Large ribosomal subunit protein uL16">
    <location>
        <begin position="1"/>
        <end position="145"/>
    </location>
</feature>
<keyword id="KW-0687">Ribonucleoprotein</keyword>
<keyword id="KW-0689">Ribosomal protein</keyword>
<keyword id="KW-0694">RNA-binding</keyword>
<keyword id="KW-0699">rRNA-binding</keyword>
<keyword id="KW-0820">tRNA-binding</keyword>
<organism>
    <name type="scientific">Agathobacter rectalis (strain ATCC 33656 / DSM 3377 / JCM 17463 / KCTC 5835 / VPI 0990)</name>
    <name type="common">Eubacterium rectale</name>
    <dbReference type="NCBI Taxonomy" id="515619"/>
    <lineage>
        <taxon>Bacteria</taxon>
        <taxon>Bacillati</taxon>
        <taxon>Bacillota</taxon>
        <taxon>Clostridia</taxon>
        <taxon>Lachnospirales</taxon>
        <taxon>Lachnospiraceae</taxon>
        <taxon>Agathobacter</taxon>
    </lineage>
</organism>
<sequence>MLMPKRVKHRKQFRGSMAGKATRGNKITNGEYGIVALEPCWIKANQIEAARVAMTRYIKRGGKVWIKIFPEKPVTHKPMGVRMGKGKGALEYWVAVVKPGRVLFEISGVPEDVAKEALRLATHKLPCKCKVVSRADLEGGESNEN</sequence>
<name>RL16_AGARV</name>
<evidence type="ECO:0000255" key="1">
    <source>
        <dbReference type="HAMAP-Rule" id="MF_01342"/>
    </source>
</evidence>
<evidence type="ECO:0000305" key="2"/>
<gene>
    <name evidence="1" type="primary">rplP</name>
    <name type="ordered locus">EUBREC_0425</name>
</gene>
<dbReference type="EMBL" id="CP001107">
    <property type="protein sequence ID" value="ACR74216.1"/>
    <property type="molecule type" value="Genomic_DNA"/>
</dbReference>
<dbReference type="RefSeq" id="WP_012741334.1">
    <property type="nucleotide sequence ID" value="NZ_CAXSYD010000003.1"/>
</dbReference>
<dbReference type="SMR" id="C4ZBS6"/>
<dbReference type="STRING" id="515619.EUBREC_0425"/>
<dbReference type="PaxDb" id="515619-EUBREC_0425"/>
<dbReference type="GeneID" id="86987335"/>
<dbReference type="KEGG" id="ere:EUBREC_0425"/>
<dbReference type="HOGENOM" id="CLU_078858_2_1_9"/>
<dbReference type="Proteomes" id="UP000001477">
    <property type="component" value="Chromosome"/>
</dbReference>
<dbReference type="GO" id="GO:0022625">
    <property type="term" value="C:cytosolic large ribosomal subunit"/>
    <property type="evidence" value="ECO:0007669"/>
    <property type="project" value="TreeGrafter"/>
</dbReference>
<dbReference type="GO" id="GO:0019843">
    <property type="term" value="F:rRNA binding"/>
    <property type="evidence" value="ECO:0007669"/>
    <property type="project" value="UniProtKB-UniRule"/>
</dbReference>
<dbReference type="GO" id="GO:0003735">
    <property type="term" value="F:structural constituent of ribosome"/>
    <property type="evidence" value="ECO:0007669"/>
    <property type="project" value="InterPro"/>
</dbReference>
<dbReference type="GO" id="GO:0000049">
    <property type="term" value="F:tRNA binding"/>
    <property type="evidence" value="ECO:0007669"/>
    <property type="project" value="UniProtKB-KW"/>
</dbReference>
<dbReference type="GO" id="GO:0006412">
    <property type="term" value="P:translation"/>
    <property type="evidence" value="ECO:0007669"/>
    <property type="project" value="UniProtKB-UniRule"/>
</dbReference>
<dbReference type="CDD" id="cd01433">
    <property type="entry name" value="Ribosomal_L16_L10e"/>
    <property type="match status" value="1"/>
</dbReference>
<dbReference type="FunFam" id="3.90.1170.10:FF:000001">
    <property type="entry name" value="50S ribosomal protein L16"/>
    <property type="match status" value="1"/>
</dbReference>
<dbReference type="Gene3D" id="3.90.1170.10">
    <property type="entry name" value="Ribosomal protein L10e/L16"/>
    <property type="match status" value="1"/>
</dbReference>
<dbReference type="HAMAP" id="MF_01342">
    <property type="entry name" value="Ribosomal_uL16"/>
    <property type="match status" value="1"/>
</dbReference>
<dbReference type="InterPro" id="IPR047873">
    <property type="entry name" value="Ribosomal_uL16"/>
</dbReference>
<dbReference type="InterPro" id="IPR000114">
    <property type="entry name" value="Ribosomal_uL16_bact-type"/>
</dbReference>
<dbReference type="InterPro" id="IPR020798">
    <property type="entry name" value="Ribosomal_uL16_CS"/>
</dbReference>
<dbReference type="InterPro" id="IPR016180">
    <property type="entry name" value="Ribosomal_uL16_dom"/>
</dbReference>
<dbReference type="InterPro" id="IPR036920">
    <property type="entry name" value="Ribosomal_uL16_sf"/>
</dbReference>
<dbReference type="NCBIfam" id="TIGR01164">
    <property type="entry name" value="rplP_bact"/>
    <property type="match status" value="1"/>
</dbReference>
<dbReference type="PANTHER" id="PTHR12220">
    <property type="entry name" value="50S/60S RIBOSOMAL PROTEIN L16"/>
    <property type="match status" value="1"/>
</dbReference>
<dbReference type="PANTHER" id="PTHR12220:SF13">
    <property type="entry name" value="LARGE RIBOSOMAL SUBUNIT PROTEIN UL16M"/>
    <property type="match status" value="1"/>
</dbReference>
<dbReference type="Pfam" id="PF00252">
    <property type="entry name" value="Ribosomal_L16"/>
    <property type="match status" value="1"/>
</dbReference>
<dbReference type="PRINTS" id="PR00060">
    <property type="entry name" value="RIBOSOMALL16"/>
</dbReference>
<dbReference type="SUPFAM" id="SSF54686">
    <property type="entry name" value="Ribosomal protein L16p/L10e"/>
    <property type="match status" value="1"/>
</dbReference>
<dbReference type="PROSITE" id="PS00586">
    <property type="entry name" value="RIBOSOMAL_L16_1"/>
    <property type="match status" value="1"/>
</dbReference>
<dbReference type="PROSITE" id="PS00701">
    <property type="entry name" value="RIBOSOMAL_L16_2"/>
    <property type="match status" value="1"/>
</dbReference>
<protein>
    <recommendedName>
        <fullName evidence="1">Large ribosomal subunit protein uL16</fullName>
    </recommendedName>
    <alternativeName>
        <fullName evidence="2">50S ribosomal protein L16</fullName>
    </alternativeName>
</protein>